<reference key="1">
    <citation type="journal article" date="2004" name="Proc. Natl. Acad. Sci. U.S.A.">
        <title>Insights into the evolution of Yersinia pestis through whole-genome comparison with Yersinia pseudotuberculosis.</title>
        <authorList>
            <person name="Chain P.S.G."/>
            <person name="Carniel E."/>
            <person name="Larimer F.W."/>
            <person name="Lamerdin J."/>
            <person name="Stoutland P.O."/>
            <person name="Regala W.M."/>
            <person name="Georgescu A.M."/>
            <person name="Vergez L.M."/>
            <person name="Land M.L."/>
            <person name="Motin V.L."/>
            <person name="Brubaker R.R."/>
            <person name="Fowler J."/>
            <person name="Hinnebusch J."/>
            <person name="Marceau M."/>
            <person name="Medigue C."/>
            <person name="Simonet M."/>
            <person name="Chenal-Francisque V."/>
            <person name="Souza B."/>
            <person name="Dacheux D."/>
            <person name="Elliott J.M."/>
            <person name="Derbise A."/>
            <person name="Hauser L.J."/>
            <person name="Garcia E."/>
        </authorList>
    </citation>
    <scope>NUCLEOTIDE SEQUENCE [LARGE SCALE GENOMIC DNA]</scope>
    <source>
        <strain>IP32953</strain>
    </source>
</reference>
<feature type="chain" id="PRO_0000142273" description="Imidazole glycerol phosphate synthase subunit HisF">
    <location>
        <begin position="1"/>
        <end position="258"/>
    </location>
</feature>
<feature type="active site" evidence="1">
    <location>
        <position position="11"/>
    </location>
</feature>
<feature type="active site" evidence="1">
    <location>
        <position position="130"/>
    </location>
</feature>
<sequence>MLAKRIIPCLDVKDGQVVKGVQFRNHEIIGDIVPLAQRYAQEGADELVFYDITASSDGRVVDKSWVARVAEVIDIPFCVAGGIKSVEDASQILTFGADKISINSPALADPTLITRLADRYGVQCIVVGIDTWYDTESDSYQVYQFTGDEKRTKATTWQTEDWVKEVQLRGAGEIVLNMMNQDGVRNGYDLRQLQQMRAICHVPLIASGGAGTPEHFLEAFRDADVDGALAASVFHKQIINIGELKKYLSEQGVEIRVC</sequence>
<accession>Q66C54</accession>
<organism>
    <name type="scientific">Yersinia pseudotuberculosis serotype I (strain IP32953)</name>
    <dbReference type="NCBI Taxonomy" id="273123"/>
    <lineage>
        <taxon>Bacteria</taxon>
        <taxon>Pseudomonadati</taxon>
        <taxon>Pseudomonadota</taxon>
        <taxon>Gammaproteobacteria</taxon>
        <taxon>Enterobacterales</taxon>
        <taxon>Yersiniaceae</taxon>
        <taxon>Yersinia</taxon>
    </lineage>
</organism>
<dbReference type="EC" id="4.3.2.10" evidence="1"/>
<dbReference type="EMBL" id="BX936398">
    <property type="protein sequence ID" value="CAH20795.1"/>
    <property type="molecule type" value="Genomic_DNA"/>
</dbReference>
<dbReference type="RefSeq" id="WP_011192119.1">
    <property type="nucleotide sequence ID" value="NC_006155.1"/>
</dbReference>
<dbReference type="SMR" id="Q66C54"/>
<dbReference type="GeneID" id="49786358"/>
<dbReference type="KEGG" id="ypo:BZ17_959"/>
<dbReference type="KEGG" id="yps:YPTB1556"/>
<dbReference type="PATRIC" id="fig|273123.14.peg.1019"/>
<dbReference type="UniPathway" id="UPA00031">
    <property type="reaction ID" value="UER00010"/>
</dbReference>
<dbReference type="Proteomes" id="UP000001011">
    <property type="component" value="Chromosome"/>
</dbReference>
<dbReference type="GO" id="GO:0005737">
    <property type="term" value="C:cytoplasm"/>
    <property type="evidence" value="ECO:0007669"/>
    <property type="project" value="UniProtKB-SubCell"/>
</dbReference>
<dbReference type="GO" id="GO:0000107">
    <property type="term" value="F:imidazoleglycerol-phosphate synthase activity"/>
    <property type="evidence" value="ECO:0007669"/>
    <property type="project" value="UniProtKB-UniRule"/>
</dbReference>
<dbReference type="GO" id="GO:0016829">
    <property type="term" value="F:lyase activity"/>
    <property type="evidence" value="ECO:0007669"/>
    <property type="project" value="UniProtKB-KW"/>
</dbReference>
<dbReference type="GO" id="GO:0000105">
    <property type="term" value="P:L-histidine biosynthetic process"/>
    <property type="evidence" value="ECO:0007669"/>
    <property type="project" value="UniProtKB-UniRule"/>
</dbReference>
<dbReference type="CDD" id="cd04731">
    <property type="entry name" value="HisF"/>
    <property type="match status" value="1"/>
</dbReference>
<dbReference type="FunFam" id="3.20.20.70:FF:000006">
    <property type="entry name" value="Imidazole glycerol phosphate synthase subunit HisF"/>
    <property type="match status" value="1"/>
</dbReference>
<dbReference type="Gene3D" id="3.20.20.70">
    <property type="entry name" value="Aldolase class I"/>
    <property type="match status" value="1"/>
</dbReference>
<dbReference type="HAMAP" id="MF_01013">
    <property type="entry name" value="HisF"/>
    <property type="match status" value="1"/>
</dbReference>
<dbReference type="InterPro" id="IPR013785">
    <property type="entry name" value="Aldolase_TIM"/>
</dbReference>
<dbReference type="InterPro" id="IPR006062">
    <property type="entry name" value="His_biosynth"/>
</dbReference>
<dbReference type="InterPro" id="IPR004651">
    <property type="entry name" value="HisF"/>
</dbReference>
<dbReference type="InterPro" id="IPR050064">
    <property type="entry name" value="IGPS_HisA/HisF"/>
</dbReference>
<dbReference type="InterPro" id="IPR011060">
    <property type="entry name" value="RibuloseP-bd_barrel"/>
</dbReference>
<dbReference type="NCBIfam" id="TIGR00735">
    <property type="entry name" value="hisF"/>
    <property type="match status" value="1"/>
</dbReference>
<dbReference type="PANTHER" id="PTHR21235:SF2">
    <property type="entry name" value="IMIDAZOLE GLYCEROL PHOSPHATE SYNTHASE HISHF"/>
    <property type="match status" value="1"/>
</dbReference>
<dbReference type="PANTHER" id="PTHR21235">
    <property type="entry name" value="IMIDAZOLE GLYCEROL PHOSPHATE SYNTHASE SUBUNIT HISF/H IGP SYNTHASE SUBUNIT HISF/H"/>
    <property type="match status" value="1"/>
</dbReference>
<dbReference type="Pfam" id="PF00977">
    <property type="entry name" value="His_biosynth"/>
    <property type="match status" value="1"/>
</dbReference>
<dbReference type="SUPFAM" id="SSF51366">
    <property type="entry name" value="Ribulose-phoshate binding barrel"/>
    <property type="match status" value="1"/>
</dbReference>
<gene>
    <name evidence="1" type="primary">hisF</name>
    <name type="ordered locus">YPTB1556</name>
</gene>
<name>HIS6_YERPS</name>
<evidence type="ECO:0000255" key="1">
    <source>
        <dbReference type="HAMAP-Rule" id="MF_01013"/>
    </source>
</evidence>
<comment type="function">
    <text evidence="1">IGPS catalyzes the conversion of PRFAR and glutamine to IGP, AICAR and glutamate. The HisF subunit catalyzes the cyclization activity that produces IGP and AICAR from PRFAR using the ammonia provided by the HisH subunit.</text>
</comment>
<comment type="catalytic activity">
    <reaction evidence="1">
        <text>5-[(5-phospho-1-deoxy-D-ribulos-1-ylimino)methylamino]-1-(5-phospho-beta-D-ribosyl)imidazole-4-carboxamide + L-glutamine = D-erythro-1-(imidazol-4-yl)glycerol 3-phosphate + 5-amino-1-(5-phospho-beta-D-ribosyl)imidazole-4-carboxamide + L-glutamate + H(+)</text>
        <dbReference type="Rhea" id="RHEA:24793"/>
        <dbReference type="ChEBI" id="CHEBI:15378"/>
        <dbReference type="ChEBI" id="CHEBI:29985"/>
        <dbReference type="ChEBI" id="CHEBI:58278"/>
        <dbReference type="ChEBI" id="CHEBI:58359"/>
        <dbReference type="ChEBI" id="CHEBI:58475"/>
        <dbReference type="ChEBI" id="CHEBI:58525"/>
        <dbReference type="EC" id="4.3.2.10"/>
    </reaction>
</comment>
<comment type="pathway">
    <text evidence="1">Amino-acid biosynthesis; L-histidine biosynthesis; L-histidine from 5-phospho-alpha-D-ribose 1-diphosphate: step 5/9.</text>
</comment>
<comment type="subunit">
    <text evidence="1">Heterodimer of HisH and HisF.</text>
</comment>
<comment type="subcellular location">
    <subcellularLocation>
        <location evidence="1">Cytoplasm</location>
    </subcellularLocation>
</comment>
<comment type="similarity">
    <text evidence="1">Belongs to the HisA/HisF family.</text>
</comment>
<protein>
    <recommendedName>
        <fullName evidence="1">Imidazole glycerol phosphate synthase subunit HisF</fullName>
        <ecNumber evidence="1">4.3.2.10</ecNumber>
    </recommendedName>
    <alternativeName>
        <fullName evidence="1">IGP synthase cyclase subunit</fullName>
    </alternativeName>
    <alternativeName>
        <fullName evidence="1">IGP synthase subunit HisF</fullName>
    </alternativeName>
    <alternativeName>
        <fullName evidence="1">ImGP synthase subunit HisF</fullName>
        <shortName evidence="1">IGPS subunit HisF</shortName>
    </alternativeName>
</protein>
<proteinExistence type="inferred from homology"/>
<keyword id="KW-0028">Amino-acid biosynthesis</keyword>
<keyword id="KW-0963">Cytoplasm</keyword>
<keyword id="KW-0368">Histidine biosynthesis</keyword>
<keyword id="KW-0456">Lyase</keyword>